<name>SECA_DEHMB</name>
<evidence type="ECO:0000255" key="1">
    <source>
        <dbReference type="HAMAP-Rule" id="MF_01382"/>
    </source>
</evidence>
<evidence type="ECO:0000256" key="2">
    <source>
        <dbReference type="SAM" id="MobiDB-lite"/>
    </source>
</evidence>
<feature type="chain" id="PRO_1000087314" description="Protein translocase subunit SecA">
    <location>
        <begin position="1"/>
        <end position="952"/>
    </location>
</feature>
<feature type="region of interest" description="Disordered" evidence="2">
    <location>
        <begin position="614"/>
        <end position="636"/>
    </location>
</feature>
<feature type="region of interest" description="Disordered" evidence="2">
    <location>
        <begin position="916"/>
        <end position="946"/>
    </location>
</feature>
<feature type="compositionally biased region" description="Basic and acidic residues" evidence="2">
    <location>
        <begin position="614"/>
        <end position="624"/>
    </location>
</feature>
<feature type="binding site" evidence="1">
    <location>
        <position position="135"/>
    </location>
    <ligand>
        <name>ATP</name>
        <dbReference type="ChEBI" id="CHEBI:30616"/>
    </ligand>
</feature>
<feature type="binding site" evidence="1">
    <location>
        <begin position="153"/>
        <end position="157"/>
    </location>
    <ligand>
        <name>ATP</name>
        <dbReference type="ChEBI" id="CHEBI:30616"/>
    </ligand>
</feature>
<feature type="binding site" evidence="1">
    <location>
        <position position="575"/>
    </location>
    <ligand>
        <name>ATP</name>
        <dbReference type="ChEBI" id="CHEBI:30616"/>
    </ligand>
</feature>
<feature type="binding site" evidence="1">
    <location>
        <position position="938"/>
    </location>
    <ligand>
        <name>Zn(2+)</name>
        <dbReference type="ChEBI" id="CHEBI:29105"/>
    </ligand>
</feature>
<feature type="binding site" evidence="1">
    <location>
        <position position="940"/>
    </location>
    <ligand>
        <name>Zn(2+)</name>
        <dbReference type="ChEBI" id="CHEBI:29105"/>
    </ligand>
</feature>
<feature type="binding site" evidence="1">
    <location>
        <position position="949"/>
    </location>
    <ligand>
        <name>Zn(2+)</name>
        <dbReference type="ChEBI" id="CHEBI:29105"/>
    </ligand>
</feature>
<feature type="binding site" evidence="1">
    <location>
        <position position="950"/>
    </location>
    <ligand>
        <name>Zn(2+)</name>
        <dbReference type="ChEBI" id="CHEBI:29105"/>
    </ligand>
</feature>
<gene>
    <name evidence="1" type="primary">secA</name>
    <name type="ordered locus">DehaBAV1_0411</name>
</gene>
<comment type="function">
    <text evidence="1">Part of the Sec protein translocase complex. Interacts with the SecYEG preprotein conducting channel. Has a central role in coupling the hydrolysis of ATP to the transfer of proteins into and across the cell membrane, serving as an ATP-driven molecular motor driving the stepwise translocation of polypeptide chains across the membrane.</text>
</comment>
<comment type="catalytic activity">
    <reaction evidence="1">
        <text>ATP + H2O + cellular proteinSide 1 = ADP + phosphate + cellular proteinSide 2.</text>
        <dbReference type="EC" id="7.4.2.8"/>
    </reaction>
</comment>
<comment type="cofactor">
    <cofactor evidence="1">
        <name>Zn(2+)</name>
        <dbReference type="ChEBI" id="CHEBI:29105"/>
    </cofactor>
    <text evidence="1">May bind 1 zinc ion per subunit.</text>
</comment>
<comment type="subunit">
    <text evidence="1">Monomer and homodimer. Part of the essential Sec protein translocation apparatus which comprises SecA, SecYEG and auxiliary proteins SecDF. Other proteins may also be involved.</text>
</comment>
<comment type="subcellular location">
    <subcellularLocation>
        <location evidence="1">Cell membrane</location>
        <topology evidence="1">Peripheral membrane protein</topology>
        <orientation evidence="1">Cytoplasmic side</orientation>
    </subcellularLocation>
    <subcellularLocation>
        <location evidence="1">Cytoplasm</location>
    </subcellularLocation>
    <text evidence="1">Distribution is 50-50.</text>
</comment>
<comment type="similarity">
    <text evidence="1">Belongs to the SecA family.</text>
</comment>
<protein>
    <recommendedName>
        <fullName evidence="1">Protein translocase subunit SecA</fullName>
        <ecNumber evidence="1">7.4.2.8</ecNumber>
    </recommendedName>
</protein>
<keyword id="KW-0067">ATP-binding</keyword>
<keyword id="KW-1003">Cell membrane</keyword>
<keyword id="KW-0963">Cytoplasm</keyword>
<keyword id="KW-0472">Membrane</keyword>
<keyword id="KW-0479">Metal-binding</keyword>
<keyword id="KW-0547">Nucleotide-binding</keyword>
<keyword id="KW-0653">Protein transport</keyword>
<keyword id="KW-1278">Translocase</keyword>
<keyword id="KW-0811">Translocation</keyword>
<keyword id="KW-0813">Transport</keyword>
<keyword id="KW-0862">Zinc</keyword>
<dbReference type="EC" id="7.4.2.8" evidence="1"/>
<dbReference type="EMBL" id="CP000688">
    <property type="protein sequence ID" value="ABQ16996.1"/>
    <property type="molecule type" value="Genomic_DNA"/>
</dbReference>
<dbReference type="SMR" id="A5FS29"/>
<dbReference type="KEGG" id="deb:DehaBAV1_0411"/>
<dbReference type="PATRIC" id="fig|216389.18.peg.454"/>
<dbReference type="HOGENOM" id="CLU_005314_3_0_0"/>
<dbReference type="GO" id="GO:0031522">
    <property type="term" value="C:cell envelope Sec protein transport complex"/>
    <property type="evidence" value="ECO:0007669"/>
    <property type="project" value="TreeGrafter"/>
</dbReference>
<dbReference type="GO" id="GO:0005829">
    <property type="term" value="C:cytosol"/>
    <property type="evidence" value="ECO:0007669"/>
    <property type="project" value="TreeGrafter"/>
</dbReference>
<dbReference type="GO" id="GO:0005886">
    <property type="term" value="C:plasma membrane"/>
    <property type="evidence" value="ECO:0007669"/>
    <property type="project" value="UniProtKB-SubCell"/>
</dbReference>
<dbReference type="GO" id="GO:0005524">
    <property type="term" value="F:ATP binding"/>
    <property type="evidence" value="ECO:0007669"/>
    <property type="project" value="UniProtKB-UniRule"/>
</dbReference>
<dbReference type="GO" id="GO:0046872">
    <property type="term" value="F:metal ion binding"/>
    <property type="evidence" value="ECO:0007669"/>
    <property type="project" value="UniProtKB-KW"/>
</dbReference>
<dbReference type="GO" id="GO:0008564">
    <property type="term" value="F:protein-exporting ATPase activity"/>
    <property type="evidence" value="ECO:0007669"/>
    <property type="project" value="UniProtKB-EC"/>
</dbReference>
<dbReference type="GO" id="GO:0065002">
    <property type="term" value="P:intracellular protein transmembrane transport"/>
    <property type="evidence" value="ECO:0007669"/>
    <property type="project" value="UniProtKB-UniRule"/>
</dbReference>
<dbReference type="GO" id="GO:0017038">
    <property type="term" value="P:protein import"/>
    <property type="evidence" value="ECO:0007669"/>
    <property type="project" value="InterPro"/>
</dbReference>
<dbReference type="GO" id="GO:0006605">
    <property type="term" value="P:protein targeting"/>
    <property type="evidence" value="ECO:0007669"/>
    <property type="project" value="UniProtKB-UniRule"/>
</dbReference>
<dbReference type="GO" id="GO:0043952">
    <property type="term" value="P:protein transport by the Sec complex"/>
    <property type="evidence" value="ECO:0007669"/>
    <property type="project" value="TreeGrafter"/>
</dbReference>
<dbReference type="CDD" id="cd17928">
    <property type="entry name" value="DEXDc_SecA"/>
    <property type="match status" value="1"/>
</dbReference>
<dbReference type="CDD" id="cd18803">
    <property type="entry name" value="SF2_C_secA"/>
    <property type="match status" value="1"/>
</dbReference>
<dbReference type="FunFam" id="3.40.50.300:FF:000113">
    <property type="entry name" value="Preprotein translocase subunit SecA"/>
    <property type="match status" value="1"/>
</dbReference>
<dbReference type="FunFam" id="3.90.1440.10:FF:000001">
    <property type="entry name" value="Preprotein translocase subunit SecA"/>
    <property type="match status" value="1"/>
</dbReference>
<dbReference type="Gene3D" id="1.10.3060.10">
    <property type="entry name" value="Helical scaffold and wing domains of SecA"/>
    <property type="match status" value="1"/>
</dbReference>
<dbReference type="Gene3D" id="3.40.50.300">
    <property type="entry name" value="P-loop containing nucleotide triphosphate hydrolases"/>
    <property type="match status" value="2"/>
</dbReference>
<dbReference type="Gene3D" id="3.90.1440.10">
    <property type="entry name" value="SecA, preprotein cross-linking domain"/>
    <property type="match status" value="1"/>
</dbReference>
<dbReference type="HAMAP" id="MF_01382">
    <property type="entry name" value="SecA"/>
    <property type="match status" value="1"/>
</dbReference>
<dbReference type="InterPro" id="IPR014001">
    <property type="entry name" value="Helicase_ATP-bd"/>
</dbReference>
<dbReference type="InterPro" id="IPR001650">
    <property type="entry name" value="Helicase_C-like"/>
</dbReference>
<dbReference type="InterPro" id="IPR027417">
    <property type="entry name" value="P-loop_NTPase"/>
</dbReference>
<dbReference type="InterPro" id="IPR004027">
    <property type="entry name" value="SEC_C_motif"/>
</dbReference>
<dbReference type="InterPro" id="IPR000185">
    <property type="entry name" value="SecA"/>
</dbReference>
<dbReference type="InterPro" id="IPR020937">
    <property type="entry name" value="SecA_CS"/>
</dbReference>
<dbReference type="InterPro" id="IPR011115">
    <property type="entry name" value="SecA_DEAD"/>
</dbReference>
<dbReference type="InterPro" id="IPR014018">
    <property type="entry name" value="SecA_motor_DEAD"/>
</dbReference>
<dbReference type="InterPro" id="IPR011130">
    <property type="entry name" value="SecA_preprotein_X-link_dom"/>
</dbReference>
<dbReference type="InterPro" id="IPR044722">
    <property type="entry name" value="SecA_SF2_C"/>
</dbReference>
<dbReference type="InterPro" id="IPR011116">
    <property type="entry name" value="SecA_Wing/Scaffold"/>
</dbReference>
<dbReference type="InterPro" id="IPR036266">
    <property type="entry name" value="SecA_Wing/Scaffold_sf"/>
</dbReference>
<dbReference type="InterPro" id="IPR036670">
    <property type="entry name" value="SecA_X-link_sf"/>
</dbReference>
<dbReference type="NCBIfam" id="NF009538">
    <property type="entry name" value="PRK12904.1"/>
    <property type="match status" value="1"/>
</dbReference>
<dbReference type="NCBIfam" id="TIGR00963">
    <property type="entry name" value="secA"/>
    <property type="match status" value="1"/>
</dbReference>
<dbReference type="PANTHER" id="PTHR30612:SF0">
    <property type="entry name" value="CHLOROPLAST PROTEIN-TRANSPORTING ATPASE"/>
    <property type="match status" value="1"/>
</dbReference>
<dbReference type="PANTHER" id="PTHR30612">
    <property type="entry name" value="SECA INNER MEMBRANE COMPONENT OF SEC PROTEIN SECRETION SYSTEM"/>
    <property type="match status" value="1"/>
</dbReference>
<dbReference type="Pfam" id="PF21090">
    <property type="entry name" value="P-loop_SecA"/>
    <property type="match status" value="1"/>
</dbReference>
<dbReference type="Pfam" id="PF02810">
    <property type="entry name" value="SEC-C"/>
    <property type="match status" value="1"/>
</dbReference>
<dbReference type="Pfam" id="PF07517">
    <property type="entry name" value="SecA_DEAD"/>
    <property type="match status" value="1"/>
</dbReference>
<dbReference type="Pfam" id="PF01043">
    <property type="entry name" value="SecA_PP_bind"/>
    <property type="match status" value="1"/>
</dbReference>
<dbReference type="Pfam" id="PF07516">
    <property type="entry name" value="SecA_SW"/>
    <property type="match status" value="1"/>
</dbReference>
<dbReference type="PRINTS" id="PR00906">
    <property type="entry name" value="SECA"/>
</dbReference>
<dbReference type="SMART" id="SM00957">
    <property type="entry name" value="SecA_DEAD"/>
    <property type="match status" value="1"/>
</dbReference>
<dbReference type="SMART" id="SM00958">
    <property type="entry name" value="SecA_PP_bind"/>
    <property type="match status" value="1"/>
</dbReference>
<dbReference type="SUPFAM" id="SSF81886">
    <property type="entry name" value="Helical scaffold and wing domains of SecA"/>
    <property type="match status" value="1"/>
</dbReference>
<dbReference type="SUPFAM" id="SSF52540">
    <property type="entry name" value="P-loop containing nucleoside triphosphate hydrolases"/>
    <property type="match status" value="2"/>
</dbReference>
<dbReference type="SUPFAM" id="SSF81767">
    <property type="entry name" value="Pre-protein crosslinking domain of SecA"/>
    <property type="match status" value="1"/>
</dbReference>
<dbReference type="PROSITE" id="PS01312">
    <property type="entry name" value="SECA"/>
    <property type="match status" value="1"/>
</dbReference>
<dbReference type="PROSITE" id="PS51196">
    <property type="entry name" value="SECA_MOTOR_DEAD"/>
    <property type="match status" value="1"/>
</dbReference>
<sequence length="952" mass="107038">MFKFFSSFGDSNEKEIRALEPLVDKINQLENSFTTLSDEALKAKTIEFRARLKDTFETTTAGIQEDITSTTAELAEAQKIADNSKQSRLKAKLESLNKDLSAKETTALNGILPEAFAAVREASRRTIGLRHYDVQLIGGMVLHHGKIAEMRTGEGKTLVATLPLYLNSLLGKGVHLVTVNDYLARRDAYWMGPVYHALGVSVSSIYPMQTPTEELPSRLFDPDYTSEIPGDPWTHFRPISRQEAYKADITYGTSTEFGFDYLRDNLRPDLAQCVQRDMNYAIVDEIDNLLIDEARTPLIISAPDTEAGKLYDVFARLSPRLVAVKDYEINEKDRNAELTEDGWANVEKLLSREGVMKGNSLYDPQNAPLIRHLRNALSAKEFYKKDHQYVVKEGEIIIIDEFTGRMMLGRRYSEGLHQAIEAKEHVKVQQESKTYATVTIQNLFRMYRKLCGMTGTAATEAEEFSKIYKLEVVIIPTNKPAVREDYGDQIYKDQSAKFKAVVNEIDEMRKLGRPVLVGTVSIENSEMLSNMLKRQGIEHKVLNAKQHEKEAQVVAEAGKPGAVTVATNMAGRGVDILLGGKEPTKDDAKVYNEWQAHHQQVLEAGGLHVIGTERHESRRIDNQLRGRSGRQGDPGSSRFYVALDDDIMRRFGSERIQGIMEWAGMDENTPIENGLVSRTLENAQKRVEGYHFDVRKHLVEYDDVVNKHREVIYAERRKILSGADLKSNILDMIREEIITQTAEHTRGYDSSEWNLDGLVTHLNGIFTLPAEINAEALAKLSQEEITDLLTRTAEELYQKKEDETGAGSMRLLERIIMLHTLDSLWVEHLTIMENLRREIGLQAFAQRDPLIAYKNEGHVRFQELLETIKHDVVHNIYRIGIQIQHQTESATAKAASSPVQQQKPLPAAPAAAIPGVSAKAATQSTTPAAKEIGRNDPCPCGSGKKYKKCCGK</sequence>
<proteinExistence type="inferred from homology"/>
<reference key="1">
    <citation type="submission" date="2007-05" db="EMBL/GenBank/DDBJ databases">
        <title>Complete sequence of Dehalococcoides sp. BAV1.</title>
        <authorList>
            <consortium name="US DOE Joint Genome Institute"/>
            <person name="Copeland A."/>
            <person name="Lucas S."/>
            <person name="Lapidus A."/>
            <person name="Barry K."/>
            <person name="Detter J.C."/>
            <person name="Glavina del Rio T."/>
            <person name="Hammon N."/>
            <person name="Israni S."/>
            <person name="Pitluck S."/>
            <person name="Lowry S."/>
            <person name="Clum A."/>
            <person name="Schmutz J."/>
            <person name="Larimer F."/>
            <person name="Land M."/>
            <person name="Hauser L."/>
            <person name="Kyrpides N."/>
            <person name="Kim E."/>
            <person name="Ritalahti K.M."/>
            <person name="Loeffler F."/>
            <person name="Richardson P."/>
        </authorList>
    </citation>
    <scope>NUCLEOTIDE SEQUENCE [LARGE SCALE GENOMIC DNA]</scope>
    <source>
        <strain>ATCC BAA-2100 / JCM 16839 / KCTC 5957 / BAV1</strain>
    </source>
</reference>
<organism>
    <name type="scientific">Dehalococcoides mccartyi (strain ATCC BAA-2100 / JCM 16839 / KCTC 5957 / BAV1)</name>
    <dbReference type="NCBI Taxonomy" id="216389"/>
    <lineage>
        <taxon>Bacteria</taxon>
        <taxon>Bacillati</taxon>
        <taxon>Chloroflexota</taxon>
        <taxon>Dehalococcoidia</taxon>
        <taxon>Dehalococcoidales</taxon>
        <taxon>Dehalococcoidaceae</taxon>
        <taxon>Dehalococcoides</taxon>
    </lineage>
</organism>
<accession>A5FS29</accession>